<keyword id="KW-0186">Copper</keyword>
<keyword id="KW-0472">Membrane</keyword>
<keyword id="KW-0496">Mitochondrion</keyword>
<keyword id="KW-0999">Mitochondrion inner membrane</keyword>
<keyword id="KW-1185">Reference proteome</keyword>
<keyword id="KW-0809">Transit peptide</keyword>
<keyword id="KW-0812">Transmembrane</keyword>
<keyword id="KW-1133">Transmembrane helix</keyword>
<sequence length="277" mass="31455">MGGLWRPGWRRVAFCGWRWIHPGSPTRAAERVEPFLRPECSGTGGAGRGLRWLGTWKRCSLGARHPALQPPRRHKNSNPFTRAQKEEWRRRNKTTLTYVAAVAVGMLGASYAAVPLYRLYCQTTGLGGSAVAGHASDKIENMVPVKDRIIKISFNADVHASLQWNFRPQQTEIYVVPGETALAFYRAKNPTDKPVIGISTYNIVPFEAGQYFNKIQQCFCFEEQRLNPQEEVDMPVFFYIDPEFAEDPRMIKVDLITLSYTFFEAKEGHKLPVPGYN</sequence>
<name>COX11_PONAB</name>
<reference key="1">
    <citation type="submission" date="2004-11" db="EMBL/GenBank/DDBJ databases">
        <authorList>
            <consortium name="The German cDNA consortium"/>
        </authorList>
    </citation>
    <scope>NUCLEOTIDE SEQUENCE [LARGE SCALE MRNA]</scope>
    <source>
        <tissue>Brain cortex</tissue>
    </source>
</reference>
<proteinExistence type="inferred from homology"/>
<comment type="function">
    <text evidence="1">Exerts its effect at some terminal stage of cytochrome c oxidase synthesis, probably by being involved in the insertion of the copper B into subunit I.</text>
</comment>
<comment type="subunit">
    <text evidence="2">Interacts with CNNM4/ACDP4. Interacts with RANBP2.</text>
</comment>
<comment type="subcellular location">
    <subcellularLocation>
        <location evidence="2">Mitochondrion inner membrane</location>
        <topology evidence="3">Single-pass membrane protein</topology>
        <orientation evidence="2">Intermembrane side</orientation>
    </subcellularLocation>
</comment>
<comment type="similarity">
    <text evidence="5">Belongs to the COX11/CtaG family.</text>
</comment>
<gene>
    <name type="primary">COX11</name>
</gene>
<feature type="transit peptide" description="Mitochondrion" evidence="3">
    <location>
        <begin position="1"/>
        <end position="28"/>
    </location>
</feature>
<feature type="chain" id="PRO_0000042180" description="Cytochrome c oxidase assembly protein COX11, mitochondrial">
    <location>
        <begin position="29"/>
        <end position="277"/>
    </location>
</feature>
<feature type="topological domain" description="Mitochondrial matrix" evidence="2">
    <location>
        <begin position="29"/>
        <end position="94"/>
    </location>
</feature>
<feature type="transmembrane region" description="Helical" evidence="3">
    <location>
        <begin position="95"/>
        <end position="117"/>
    </location>
</feature>
<feature type="topological domain" description="Mitochondrial intermembrane" evidence="2">
    <location>
        <begin position="118"/>
        <end position="277"/>
    </location>
</feature>
<feature type="region of interest" description="Disordered" evidence="4">
    <location>
        <begin position="64"/>
        <end position="86"/>
    </location>
</feature>
<organism>
    <name type="scientific">Pongo abelii</name>
    <name type="common">Sumatran orangutan</name>
    <name type="synonym">Pongo pygmaeus abelii</name>
    <dbReference type="NCBI Taxonomy" id="9601"/>
    <lineage>
        <taxon>Eukaryota</taxon>
        <taxon>Metazoa</taxon>
        <taxon>Chordata</taxon>
        <taxon>Craniata</taxon>
        <taxon>Vertebrata</taxon>
        <taxon>Euteleostomi</taxon>
        <taxon>Mammalia</taxon>
        <taxon>Eutheria</taxon>
        <taxon>Euarchontoglires</taxon>
        <taxon>Primates</taxon>
        <taxon>Haplorrhini</taxon>
        <taxon>Catarrhini</taxon>
        <taxon>Hominidae</taxon>
        <taxon>Pongo</taxon>
    </lineage>
</organism>
<accession>Q5R7U6</accession>
<protein>
    <recommendedName>
        <fullName>Cytochrome c oxidase assembly protein COX11, mitochondrial</fullName>
    </recommendedName>
</protein>
<dbReference type="EMBL" id="CR860013">
    <property type="protein sequence ID" value="CAH92164.1"/>
    <property type="status" value="ALT_TERM"/>
    <property type="molecule type" value="Transcribed_RNA"/>
</dbReference>
<dbReference type="SMR" id="Q5R7U6"/>
<dbReference type="FunCoup" id="Q5R7U6">
    <property type="interactions" value="1312"/>
</dbReference>
<dbReference type="STRING" id="9601.ENSPPYP00000009281"/>
<dbReference type="eggNOG" id="KOG2540">
    <property type="taxonomic scope" value="Eukaryota"/>
</dbReference>
<dbReference type="InParanoid" id="Q5R7U6"/>
<dbReference type="Proteomes" id="UP000001595">
    <property type="component" value="Unplaced"/>
</dbReference>
<dbReference type="GO" id="GO:0005743">
    <property type="term" value="C:mitochondrial inner membrane"/>
    <property type="evidence" value="ECO:0000250"/>
    <property type="project" value="UniProtKB"/>
</dbReference>
<dbReference type="GO" id="GO:0005507">
    <property type="term" value="F:copper ion binding"/>
    <property type="evidence" value="ECO:0007669"/>
    <property type="project" value="InterPro"/>
</dbReference>
<dbReference type="GO" id="GO:0006754">
    <property type="term" value="P:ATP biosynthetic process"/>
    <property type="evidence" value="ECO:0000250"/>
    <property type="project" value="UniProtKB"/>
</dbReference>
<dbReference type="FunFam" id="2.60.370.10:FF:000001">
    <property type="entry name" value="COX11 cytochrome c oxidase assembly homolog"/>
    <property type="match status" value="1"/>
</dbReference>
<dbReference type="Gene3D" id="2.60.370.10">
    <property type="entry name" value="Ctag/Cox11"/>
    <property type="match status" value="1"/>
</dbReference>
<dbReference type="HAMAP" id="MF_00155">
    <property type="entry name" value="CtaG"/>
    <property type="match status" value="1"/>
</dbReference>
<dbReference type="InterPro" id="IPR023471">
    <property type="entry name" value="CtaG/Cox11_dom_sf"/>
</dbReference>
<dbReference type="InterPro" id="IPR007533">
    <property type="entry name" value="Cyt_c_oxidase_assmbl_CtaG"/>
</dbReference>
<dbReference type="NCBIfam" id="NF003465">
    <property type="entry name" value="PRK05089.1"/>
    <property type="match status" value="1"/>
</dbReference>
<dbReference type="PANTHER" id="PTHR21320:SF3">
    <property type="entry name" value="CYTOCHROME C OXIDASE ASSEMBLY PROTEIN COX11, MITOCHONDRIAL-RELATED"/>
    <property type="match status" value="1"/>
</dbReference>
<dbReference type="PANTHER" id="PTHR21320">
    <property type="entry name" value="CYTOCHROME C OXIDASE ASSEMBLY PROTEIN COX11-RELATED"/>
    <property type="match status" value="1"/>
</dbReference>
<dbReference type="Pfam" id="PF04442">
    <property type="entry name" value="CtaG_Cox11"/>
    <property type="match status" value="1"/>
</dbReference>
<dbReference type="SUPFAM" id="SSF110111">
    <property type="entry name" value="Ctag/Cox11"/>
    <property type="match status" value="1"/>
</dbReference>
<evidence type="ECO:0000250" key="1">
    <source>
        <dbReference type="UniProtKB" id="Q8GWR0"/>
    </source>
</evidence>
<evidence type="ECO:0000250" key="2">
    <source>
        <dbReference type="UniProtKB" id="Q9Y6N1"/>
    </source>
</evidence>
<evidence type="ECO:0000255" key="3"/>
<evidence type="ECO:0000256" key="4">
    <source>
        <dbReference type="SAM" id="MobiDB-lite"/>
    </source>
</evidence>
<evidence type="ECO:0000305" key="5"/>